<reference key="1">
    <citation type="journal article" date="2004" name="Nat. Genet.">
        <title>Complete sequencing and characterization of 21,243 full-length human cDNAs.</title>
        <authorList>
            <person name="Ota T."/>
            <person name="Suzuki Y."/>
            <person name="Nishikawa T."/>
            <person name="Otsuki T."/>
            <person name="Sugiyama T."/>
            <person name="Irie R."/>
            <person name="Wakamatsu A."/>
            <person name="Hayashi K."/>
            <person name="Sato H."/>
            <person name="Nagai K."/>
            <person name="Kimura K."/>
            <person name="Makita H."/>
            <person name="Sekine M."/>
            <person name="Obayashi M."/>
            <person name="Nishi T."/>
            <person name="Shibahara T."/>
            <person name="Tanaka T."/>
            <person name="Ishii S."/>
            <person name="Yamamoto J."/>
            <person name="Saito K."/>
            <person name="Kawai Y."/>
            <person name="Isono Y."/>
            <person name="Nakamura Y."/>
            <person name="Nagahari K."/>
            <person name="Murakami K."/>
            <person name="Yasuda T."/>
            <person name="Iwayanagi T."/>
            <person name="Wagatsuma M."/>
            <person name="Shiratori A."/>
            <person name="Sudo H."/>
            <person name="Hosoiri T."/>
            <person name="Kaku Y."/>
            <person name="Kodaira H."/>
            <person name="Kondo H."/>
            <person name="Sugawara M."/>
            <person name="Takahashi M."/>
            <person name="Kanda K."/>
            <person name="Yokoi T."/>
            <person name="Furuya T."/>
            <person name="Kikkawa E."/>
            <person name="Omura Y."/>
            <person name="Abe K."/>
            <person name="Kamihara K."/>
            <person name="Katsuta N."/>
            <person name="Sato K."/>
            <person name="Tanikawa M."/>
            <person name="Yamazaki M."/>
            <person name="Ninomiya K."/>
            <person name="Ishibashi T."/>
            <person name="Yamashita H."/>
            <person name="Murakawa K."/>
            <person name="Fujimori K."/>
            <person name="Tanai H."/>
            <person name="Kimata M."/>
            <person name="Watanabe M."/>
            <person name="Hiraoka S."/>
            <person name="Chiba Y."/>
            <person name="Ishida S."/>
            <person name="Ono Y."/>
            <person name="Takiguchi S."/>
            <person name="Watanabe S."/>
            <person name="Yosida M."/>
            <person name="Hotuta T."/>
            <person name="Kusano J."/>
            <person name="Kanehori K."/>
            <person name="Takahashi-Fujii A."/>
            <person name="Hara H."/>
            <person name="Tanase T.-O."/>
            <person name="Nomura Y."/>
            <person name="Togiya S."/>
            <person name="Komai F."/>
            <person name="Hara R."/>
            <person name="Takeuchi K."/>
            <person name="Arita M."/>
            <person name="Imose N."/>
            <person name="Musashino K."/>
            <person name="Yuuki H."/>
            <person name="Oshima A."/>
            <person name="Sasaki N."/>
            <person name="Aotsuka S."/>
            <person name="Yoshikawa Y."/>
            <person name="Matsunawa H."/>
            <person name="Ichihara T."/>
            <person name="Shiohata N."/>
            <person name="Sano S."/>
            <person name="Moriya S."/>
            <person name="Momiyama H."/>
            <person name="Satoh N."/>
            <person name="Takami S."/>
            <person name="Terashima Y."/>
            <person name="Suzuki O."/>
            <person name="Nakagawa S."/>
            <person name="Senoh A."/>
            <person name="Mizoguchi H."/>
            <person name="Goto Y."/>
            <person name="Shimizu F."/>
            <person name="Wakebe H."/>
            <person name="Hishigaki H."/>
            <person name="Watanabe T."/>
            <person name="Sugiyama A."/>
            <person name="Takemoto M."/>
            <person name="Kawakami B."/>
            <person name="Yamazaki M."/>
            <person name="Watanabe K."/>
            <person name="Kumagai A."/>
            <person name="Itakura S."/>
            <person name="Fukuzumi Y."/>
            <person name="Fujimori Y."/>
            <person name="Komiyama M."/>
            <person name="Tashiro H."/>
            <person name="Tanigami A."/>
            <person name="Fujiwara T."/>
            <person name="Ono T."/>
            <person name="Yamada K."/>
            <person name="Fujii Y."/>
            <person name="Ozaki K."/>
            <person name="Hirao M."/>
            <person name="Ohmori Y."/>
            <person name="Kawabata A."/>
            <person name="Hikiji T."/>
            <person name="Kobatake N."/>
            <person name="Inagaki H."/>
            <person name="Ikema Y."/>
            <person name="Okamoto S."/>
            <person name="Okitani R."/>
            <person name="Kawakami T."/>
            <person name="Noguchi S."/>
            <person name="Itoh T."/>
            <person name="Shigeta K."/>
            <person name="Senba T."/>
            <person name="Matsumura K."/>
            <person name="Nakajima Y."/>
            <person name="Mizuno T."/>
            <person name="Morinaga M."/>
            <person name="Sasaki M."/>
            <person name="Togashi T."/>
            <person name="Oyama M."/>
            <person name="Hata H."/>
            <person name="Watanabe M."/>
            <person name="Komatsu T."/>
            <person name="Mizushima-Sugano J."/>
            <person name="Satoh T."/>
            <person name="Shirai Y."/>
            <person name="Takahashi Y."/>
            <person name="Nakagawa K."/>
            <person name="Okumura K."/>
            <person name="Nagase T."/>
            <person name="Nomura N."/>
            <person name="Kikuchi H."/>
            <person name="Masuho Y."/>
            <person name="Yamashita R."/>
            <person name="Nakai K."/>
            <person name="Yada T."/>
            <person name="Nakamura Y."/>
            <person name="Ohara O."/>
            <person name="Isogai T."/>
            <person name="Sugano S."/>
        </authorList>
    </citation>
    <scope>NUCLEOTIDE SEQUENCE [LARGE SCALE MRNA]</scope>
</reference>
<reference key="2">
    <citation type="journal article" date="1999" name="Genomics">
        <title>Genome duplications and other features in 12 Mb of DNA sequence from human chromosome 16p and 16q.</title>
        <authorList>
            <person name="Loftus B.J."/>
            <person name="Kim U.-J."/>
            <person name="Sneddon V.P."/>
            <person name="Kalush F."/>
            <person name="Brandon R."/>
            <person name="Fuhrmann J."/>
            <person name="Mason T."/>
            <person name="Crosby M.L."/>
            <person name="Barnstead M."/>
            <person name="Cronin L."/>
            <person name="Mays A.D."/>
            <person name="Cao Y."/>
            <person name="Xu R.X."/>
            <person name="Kang H.-L."/>
            <person name="Mitchell S."/>
            <person name="Eichler E.E."/>
            <person name="Harris P.C."/>
            <person name="Venter J.C."/>
            <person name="Adams M.D."/>
        </authorList>
    </citation>
    <scope>NUCLEOTIDE SEQUENCE [LARGE SCALE GENOMIC DNA]</scope>
</reference>
<reference key="3">
    <citation type="journal article" date="2004" name="Genome Res.">
        <title>The status, quality, and expansion of the NIH full-length cDNA project: the Mammalian Gene Collection (MGC).</title>
        <authorList>
            <consortium name="The MGC Project Team"/>
        </authorList>
    </citation>
    <scope>NUCLEOTIDE SEQUENCE [LARGE SCALE MRNA]</scope>
    <source>
        <tissue>Lung</tissue>
    </source>
</reference>
<reference key="4">
    <citation type="journal article" date="2006" name="Cell">
        <title>Global, in vivo, and site-specific phosphorylation dynamics in signaling networks.</title>
        <authorList>
            <person name="Olsen J.V."/>
            <person name="Blagoev B."/>
            <person name="Gnad F."/>
            <person name="Macek B."/>
            <person name="Kumar C."/>
            <person name="Mortensen P."/>
            <person name="Mann M."/>
        </authorList>
    </citation>
    <scope>PHOSPHORYLATION [LARGE SCALE ANALYSIS] AT SER-86 AND SER-88</scope>
    <scope>IDENTIFICATION BY MASS SPECTROMETRY [LARGE SCALE ANALYSIS]</scope>
    <source>
        <tissue>Cervix carcinoma</tissue>
    </source>
</reference>
<reference key="5">
    <citation type="journal article" date="2008" name="J. Proteome Res.">
        <title>Phosphorylation analysis of primary human T lymphocytes using sequential IMAC and titanium oxide enrichment.</title>
        <authorList>
            <person name="Carrascal M."/>
            <person name="Ovelleiro D."/>
            <person name="Casas V."/>
            <person name="Gay M."/>
            <person name="Abian J."/>
        </authorList>
    </citation>
    <scope>IDENTIFICATION BY MASS SPECTROMETRY [LARGE SCALE ANALYSIS]</scope>
    <source>
        <tissue>T-cell</tissue>
    </source>
</reference>
<reference key="6">
    <citation type="journal article" date="2008" name="Proc. Natl. Acad. Sci. U.S.A.">
        <title>A quantitative atlas of mitotic phosphorylation.</title>
        <authorList>
            <person name="Dephoure N."/>
            <person name="Zhou C."/>
            <person name="Villen J."/>
            <person name="Beausoleil S.A."/>
            <person name="Bakalarski C.E."/>
            <person name="Elledge S.J."/>
            <person name="Gygi S.P."/>
        </authorList>
    </citation>
    <scope>PHOSPHORYLATION [LARGE SCALE ANALYSIS] AT SER-86 AND SER-88</scope>
    <scope>IDENTIFICATION BY MASS SPECTROMETRY [LARGE SCALE ANALYSIS]</scope>
    <source>
        <tissue>Cervix carcinoma</tissue>
    </source>
</reference>
<reference key="7">
    <citation type="journal article" date="2008" name="Proteomics">
        <title>Large-scale phosphoproteome analysis of human liver tissue by enrichment and fractionation of phosphopeptides with strong anion exchange chromatography.</title>
        <authorList>
            <person name="Han G."/>
            <person name="Ye M."/>
            <person name="Zhou H."/>
            <person name="Jiang X."/>
            <person name="Feng S."/>
            <person name="Jiang X."/>
            <person name="Tian R."/>
            <person name="Wan D."/>
            <person name="Zou H."/>
            <person name="Gu J."/>
        </authorList>
    </citation>
    <scope>IDENTIFICATION BY MASS SPECTROMETRY [LARGE SCALE ANALYSIS]</scope>
    <source>
        <tissue>Liver</tissue>
    </source>
</reference>
<reference key="8">
    <citation type="journal article" date="2009" name="Anal. Chem.">
        <title>Lys-N and trypsin cover complementary parts of the phosphoproteome in a refined SCX-based approach.</title>
        <authorList>
            <person name="Gauci S."/>
            <person name="Helbig A.O."/>
            <person name="Slijper M."/>
            <person name="Krijgsveld J."/>
            <person name="Heck A.J."/>
            <person name="Mohammed S."/>
        </authorList>
    </citation>
    <scope>ACETYLATION [LARGE SCALE ANALYSIS] AT ALA-2</scope>
    <scope>CLEAVAGE OF INITIATOR METHIONINE [LARGE SCALE ANALYSIS]</scope>
    <scope>IDENTIFICATION BY MASS SPECTROMETRY [LARGE SCALE ANALYSIS]</scope>
</reference>
<reference key="9">
    <citation type="journal article" date="2009" name="Sci. Signal.">
        <title>Quantitative phosphoproteomic analysis of T cell receptor signaling reveals system-wide modulation of protein-protein interactions.</title>
        <authorList>
            <person name="Mayya V."/>
            <person name="Lundgren D.H."/>
            <person name="Hwang S.-I."/>
            <person name="Rezaul K."/>
            <person name="Wu L."/>
            <person name="Eng J.K."/>
            <person name="Rodionov V."/>
            <person name="Han D.K."/>
        </authorList>
    </citation>
    <scope>PHOSPHORYLATION [LARGE SCALE ANALYSIS] AT SER-86 AND SER-88</scope>
    <scope>IDENTIFICATION BY MASS SPECTROMETRY [LARGE SCALE ANALYSIS]</scope>
    <source>
        <tissue>Leukemic T-cell</tissue>
    </source>
</reference>
<reference key="10">
    <citation type="journal article" date="2010" name="Sci. Signal.">
        <title>Quantitative phosphoproteomics reveals widespread full phosphorylation site occupancy during mitosis.</title>
        <authorList>
            <person name="Olsen J.V."/>
            <person name="Vermeulen M."/>
            <person name="Santamaria A."/>
            <person name="Kumar C."/>
            <person name="Miller M.L."/>
            <person name="Jensen L.J."/>
            <person name="Gnad F."/>
            <person name="Cox J."/>
            <person name="Jensen T.S."/>
            <person name="Nigg E.A."/>
            <person name="Brunak S."/>
            <person name="Mann M."/>
        </authorList>
    </citation>
    <scope>PHOSPHORYLATION [LARGE SCALE ANALYSIS] AT SER-86 AND SER-88</scope>
    <scope>IDENTIFICATION BY MASS SPECTROMETRY [LARGE SCALE ANALYSIS]</scope>
    <source>
        <tissue>Cervix carcinoma</tissue>
    </source>
</reference>
<reference key="11">
    <citation type="journal article" date="2011" name="BMC Syst. Biol.">
        <title>Initial characterization of the human central proteome.</title>
        <authorList>
            <person name="Burkard T.R."/>
            <person name="Planyavsky M."/>
            <person name="Kaupe I."/>
            <person name="Breitwieser F.P."/>
            <person name="Buerckstuemmer T."/>
            <person name="Bennett K.L."/>
            <person name="Superti-Furga G."/>
            <person name="Colinge J."/>
        </authorList>
    </citation>
    <scope>IDENTIFICATION BY MASS SPECTROMETRY [LARGE SCALE ANALYSIS]</scope>
</reference>
<reference key="12">
    <citation type="journal article" date="2012" name="Proc. Natl. Acad. Sci. U.S.A.">
        <title>N-terminal acetylome analyses and functional insights of the N-terminal acetyltransferase NatB.</title>
        <authorList>
            <person name="Van Damme P."/>
            <person name="Lasa M."/>
            <person name="Polevoda B."/>
            <person name="Gazquez C."/>
            <person name="Elosegui-Artola A."/>
            <person name="Kim D.S."/>
            <person name="De Juan-Pardo E."/>
            <person name="Demeyer K."/>
            <person name="Hole K."/>
            <person name="Larrea E."/>
            <person name="Timmerman E."/>
            <person name="Prieto J."/>
            <person name="Arnesen T."/>
            <person name="Sherman F."/>
            <person name="Gevaert K."/>
            <person name="Aldabe R."/>
        </authorList>
    </citation>
    <scope>ACETYLATION [LARGE SCALE ANALYSIS] AT ALA-2</scope>
    <scope>CLEAVAGE OF INITIATOR METHIONINE [LARGE SCALE ANALYSIS]</scope>
    <scope>IDENTIFICATION BY MASS SPECTROMETRY [LARGE SCALE ANALYSIS]</scope>
</reference>
<reference key="13">
    <citation type="journal article" date="2013" name="J. Proteome Res.">
        <title>Toward a comprehensive characterization of a human cancer cell phosphoproteome.</title>
        <authorList>
            <person name="Zhou H."/>
            <person name="Di Palma S."/>
            <person name="Preisinger C."/>
            <person name="Peng M."/>
            <person name="Polat A.N."/>
            <person name="Heck A.J."/>
            <person name="Mohammed S."/>
        </authorList>
    </citation>
    <scope>PHOSPHORYLATION [LARGE SCALE ANALYSIS] AT SER-86; SER-88; SER-119 AND SER-270</scope>
    <scope>IDENTIFICATION BY MASS SPECTROMETRY [LARGE SCALE ANALYSIS]</scope>
    <source>
        <tissue>Cervix carcinoma</tissue>
        <tissue>Erythroleukemia</tissue>
    </source>
</reference>
<reference key="14">
    <citation type="journal article" date="2014" name="J. Proteomics">
        <title>An enzyme assisted RP-RPLC approach for in-depth analysis of human liver phosphoproteome.</title>
        <authorList>
            <person name="Bian Y."/>
            <person name="Song C."/>
            <person name="Cheng K."/>
            <person name="Dong M."/>
            <person name="Wang F."/>
            <person name="Huang J."/>
            <person name="Sun D."/>
            <person name="Wang L."/>
            <person name="Ye M."/>
            <person name="Zou H."/>
        </authorList>
    </citation>
    <scope>PHOSPHORYLATION [LARGE SCALE ANALYSIS] AT THR-79; SER-86 AND SER-88</scope>
    <scope>IDENTIFICATION BY MASS SPECTROMETRY [LARGE SCALE ANALYSIS]</scope>
    <source>
        <tissue>Liver</tissue>
    </source>
</reference>
<reference key="15">
    <citation type="journal article" date="2015" name="Nucleic Acids Res.">
        <title>Yeast Kre33 and human NAT10 are conserved 18S rRNA cytosine acetyltransferases that modify tRNAs assisted by the adaptor Tan1/THUMPD1.</title>
        <authorList>
            <person name="Sharma S."/>
            <person name="Langhendries J.L."/>
            <person name="Watzinger P."/>
            <person name="Koetter P."/>
            <person name="Entian K.D."/>
            <person name="Lafontaine D.L."/>
        </authorList>
    </citation>
    <scope>FUNCTION</scope>
    <scope>INTERACTION WITH NAT10</scope>
</reference>
<reference key="16">
    <citation type="submission" date="2006-09" db="PDB data bank">
        <title>Solution structure of the THUMP domain of THUMP domain-containing protein 1.</title>
        <authorList>
            <consortium name="RIKEN structural genomics initiative (RSGI)"/>
        </authorList>
    </citation>
    <scope>STRUCTURE BY NMR OF 170-254</scope>
</reference>
<reference key="17">
    <citation type="journal article" date="2019" name="Genet. Med.">
        <title>Autozygome and high throughput confirmation of disease genes candidacy.</title>
        <authorList>
            <person name="Maddirevula S."/>
            <person name="Alzahrani F."/>
            <person name="Al-Owain M."/>
            <person name="Al Muhaizea M.A."/>
            <person name="Kayyali H.R."/>
            <person name="AlHashem A."/>
            <person name="Rahbeeni Z."/>
            <person name="Al-Otaibi M."/>
            <person name="Alzaidan H.I."/>
            <person name="Balobaid A."/>
            <person name="El Khashab H.Y."/>
            <person name="Bubshait D.K."/>
            <person name="Faden M."/>
            <person name="Yamani S.A."/>
            <person name="Dabbagh O."/>
            <person name="Al-Mureikhi M."/>
            <person name="Jasser A.A."/>
            <person name="Alsaif H.S."/>
            <person name="Alluhaydan I."/>
            <person name="Seidahmed M.Z."/>
            <person name="Alabbasi B.H."/>
            <person name="Almogarri I."/>
            <person name="Kurdi W."/>
            <person name="Akleh H."/>
            <person name="Qari A."/>
            <person name="Al Tala S.M."/>
            <person name="Alhomaidi S."/>
            <person name="Kentab A.Y."/>
            <person name="Salih M.A."/>
            <person name="Chedrawi A."/>
            <person name="Alameer S."/>
            <person name="Tabarki B."/>
            <person name="Shamseldin H.E."/>
            <person name="Patel N."/>
            <person name="Ibrahim N."/>
            <person name="Abdulwahab F."/>
            <person name="Samira M."/>
            <person name="Goljan E."/>
            <person name="Abouelhoda M."/>
            <person name="Meyer B.F."/>
            <person name="Hashem M."/>
            <person name="Shaheen R."/>
            <person name="AlShahwan S."/>
            <person name="Alfadhel M."/>
            <person name="Ben-Omran T."/>
            <person name="Al-Qattan M.M."/>
            <person name="Monies D."/>
            <person name="Alkuraya F.S."/>
        </authorList>
    </citation>
    <scope>VARIANT NEDSOA 236-GLN--SER-353 DEL</scope>
</reference>
<reference key="18">
    <citation type="journal article" date="2022" name="Am. J. Hum. Genet.">
        <title>THUMPD1 bi-allelic variants cause loss of tRNA acetylation and a syndromic neurodevelopmental disorder.</title>
        <authorList>
            <person name="Broly M."/>
            <person name="Polevoda B.V."/>
            <person name="Awayda K.M."/>
            <person name="Tong N."/>
            <person name="Lentini J."/>
            <person name="Besnard T."/>
            <person name="Deb W."/>
            <person name="O'Rourke D."/>
            <person name="Baptista J."/>
            <person name="Ellard S."/>
            <person name="Almannai M."/>
            <person name="Hashem M."/>
            <person name="Abdulwahab F."/>
            <person name="Shamseldin H."/>
            <person name="Al-Tala S."/>
            <person name="Alkuraya F.S."/>
            <person name="Leon A."/>
            <person name="van Loon R.L.E."/>
            <person name="Ferlini A."/>
            <person name="Sanchini M."/>
            <person name="Bigoni S."/>
            <person name="Ciorba A."/>
            <person name="van Bokhoven H."/>
            <person name="Iqbal Z."/>
            <person name="Al-Maawali A."/>
            <person name="Al-Murshedi F."/>
            <person name="Ganesh A."/>
            <person name="Al-Mamari W."/>
            <person name="Lim S.C."/>
            <person name="Pais L.S."/>
            <person name="Brown N."/>
            <person name="Riazuddin S."/>
            <person name="Bezieau S."/>
            <person name="Fu D."/>
            <person name="Isidor B."/>
            <person name="Cogne B."/>
            <person name="O'Connell M.R."/>
        </authorList>
    </citation>
    <scope>VARIANTS NEDSOA SER-45; 114-LEU--SER-353 DEL; 157-ARG--SER-353 DEL; SER-164; 236-GLN--SER-353 DEL AND LEU-258 DEL</scope>
    <scope>INVOLVEMENT IN NEDSOA</scope>
    <scope>CHARACTERIZATION OF VARIANTS NEDSOA SER-164 AND 236-GLN--SER-353 DEL</scope>
    <scope>FUNCTION</scope>
    <scope>SUBUNIT</scope>
</reference>
<sequence length="353" mass="39315">MAAPAQQTTQPGGGKRKGKAQYVLAKRARRCDAGGPRQLEPGLQGILITCNMNERKCVEEAYSLLNEYGDDMYGPEKFTDKDQQPSGSEGEDDDAEAALKKEVGDIKASTEMRLRRFQSVESGANNVVFIRTLGIEPEKLVHHILQDMYKTKKKKTRVILRMLPISGTCKAFLEDMKKYAETFLEPWFKAPNKGTFQIVYKSRNNSHVNREEVIRELAGIVCTLNSENKVDLTNPQYTVVVEIIKAVCCLSVVKDYMLFRKYNLQEVVKSPKDPSQLNSKQGNGKEAKLESADKSDQNNTAEGKNNQQVPENTEELGQTKPTSNPQVVNEGGAKPELASQATEGSKSNENDFS</sequence>
<comment type="function">
    <text evidence="3 5">Functions as a tRNA-binding adapter to mediate NAT10-dependent tRNA acetylation modifying cytidine to N4-acetylcytidine (ac4C) (PubMed:25653167, PubMed:35196516).</text>
</comment>
<comment type="subunit">
    <text evidence="3 5">Interacts with NAT10 (PubMed:25653167). Binds tRNA (PubMed:35196516).</text>
</comment>
<comment type="interaction">
    <interactant intactId="EBI-5462248">
        <id>Q9NXG2</id>
    </interactant>
    <interactant intactId="EBI-876527">
        <id>Q9H0A0</id>
        <label>NAT10</label>
    </interactant>
    <organismsDiffer>false</organismsDiffer>
    <experiments>5</experiments>
</comment>
<comment type="disease" evidence="4 5">
    <disease id="DI-06478">
        <name>Neurodevelopmental disorder with speech delay and variable ocular anomalies</name>
        <acronym>NEDSOA</acronym>
        <description>An autosomal recessive disorder characterized by global developmental delay, speech delay, moderate to severe intellectual deficiency, behavioral abnormalities such as angry outbursts, facial dysmorphism, and ophthalmological abnormalities. Brain imaging is usually normal, but abnormalities of the corpus callosum have been reported.</description>
        <dbReference type="MIM" id="619989"/>
    </disease>
    <text>The disease is caused by variants affecting the gene represented in this entry.</text>
</comment>
<comment type="similarity">
    <text evidence="6">Belongs to the THUMPD1 family.</text>
</comment>
<proteinExistence type="evidence at protein level"/>
<keyword id="KW-0002">3D-structure</keyword>
<keyword id="KW-0007">Acetylation</keyword>
<keyword id="KW-0225">Disease variant</keyword>
<keyword id="KW-0991">Intellectual disability</keyword>
<keyword id="KW-0597">Phosphoprotein</keyword>
<keyword id="KW-1267">Proteomics identification</keyword>
<keyword id="KW-1185">Reference proteome</keyword>
<gene>
    <name type="primary">THUMPD1</name>
</gene>
<dbReference type="EMBL" id="AK000281">
    <property type="protein sequence ID" value="BAA91050.1"/>
    <property type="molecule type" value="mRNA"/>
</dbReference>
<dbReference type="EMBL" id="AC004381">
    <property type="status" value="NOT_ANNOTATED_CDS"/>
    <property type="molecule type" value="Genomic_DNA"/>
</dbReference>
<dbReference type="EMBL" id="BC000448">
    <property type="protein sequence ID" value="AAH00448.1"/>
    <property type="molecule type" value="mRNA"/>
</dbReference>
<dbReference type="CCDS" id="CCDS10588.1"/>
<dbReference type="RefSeq" id="NP_001291479.1">
    <property type="nucleotide sequence ID" value="NM_001304550.2"/>
</dbReference>
<dbReference type="RefSeq" id="NP_060206.2">
    <property type="nucleotide sequence ID" value="NM_017736.4"/>
</dbReference>
<dbReference type="RefSeq" id="XP_016878922.1">
    <property type="nucleotide sequence ID" value="XM_017023433.1"/>
</dbReference>
<dbReference type="PDB" id="2DIR">
    <property type="method" value="NMR"/>
    <property type="chains" value="A=170-254"/>
</dbReference>
<dbReference type="PDBsum" id="2DIR"/>
<dbReference type="SMR" id="Q9NXG2"/>
<dbReference type="BioGRID" id="120762">
    <property type="interactions" value="69"/>
</dbReference>
<dbReference type="FunCoup" id="Q9NXG2">
    <property type="interactions" value="2844"/>
</dbReference>
<dbReference type="IntAct" id="Q9NXG2">
    <property type="interactions" value="28"/>
</dbReference>
<dbReference type="MINT" id="Q9NXG2"/>
<dbReference type="STRING" id="9606.ENSP00000379392"/>
<dbReference type="GlyCosmos" id="Q9NXG2">
    <property type="glycosylation" value="2 sites, 1 glycan"/>
</dbReference>
<dbReference type="GlyGen" id="Q9NXG2">
    <property type="glycosylation" value="2 sites, 1 O-linked glycan (2 sites)"/>
</dbReference>
<dbReference type="iPTMnet" id="Q9NXG2"/>
<dbReference type="PhosphoSitePlus" id="Q9NXG2"/>
<dbReference type="BioMuta" id="THUMPD1"/>
<dbReference type="DMDM" id="61248576"/>
<dbReference type="jPOST" id="Q9NXG2"/>
<dbReference type="MassIVE" id="Q9NXG2"/>
<dbReference type="PaxDb" id="9606-ENSP00000370741"/>
<dbReference type="PeptideAtlas" id="Q9NXG2"/>
<dbReference type="ProteomicsDB" id="83094"/>
<dbReference type="Pumba" id="Q9NXG2"/>
<dbReference type="Antibodypedia" id="25603">
    <property type="antibodies" value="131 antibodies from 23 providers"/>
</dbReference>
<dbReference type="DNASU" id="55623"/>
<dbReference type="Ensembl" id="ENST00000381337.6">
    <property type="protein sequence ID" value="ENSP00000370741.2"/>
    <property type="gene ID" value="ENSG00000066654.14"/>
</dbReference>
<dbReference type="Ensembl" id="ENST00000396083.7">
    <property type="protein sequence ID" value="ENSP00000379392.2"/>
    <property type="gene ID" value="ENSG00000066654.14"/>
</dbReference>
<dbReference type="Ensembl" id="ENST00000636554.1">
    <property type="protein sequence ID" value="ENSP00000490841.1"/>
    <property type="gene ID" value="ENSG00000066654.14"/>
</dbReference>
<dbReference type="GeneID" id="55623"/>
<dbReference type="KEGG" id="hsa:55623"/>
<dbReference type="MANE-Select" id="ENST00000396083.7">
    <property type="protein sequence ID" value="ENSP00000379392.2"/>
    <property type="RefSeq nucleotide sequence ID" value="NM_017736.5"/>
    <property type="RefSeq protein sequence ID" value="NP_060206.2"/>
</dbReference>
<dbReference type="UCSC" id="uc002dho.5">
    <property type="organism name" value="human"/>
</dbReference>
<dbReference type="AGR" id="HGNC:23807"/>
<dbReference type="CTD" id="55623"/>
<dbReference type="DisGeNET" id="55623"/>
<dbReference type="GeneCards" id="THUMPD1"/>
<dbReference type="HGNC" id="HGNC:23807">
    <property type="gene designation" value="THUMPD1"/>
</dbReference>
<dbReference type="HPA" id="ENSG00000066654">
    <property type="expression patterns" value="Low tissue specificity"/>
</dbReference>
<dbReference type="MalaCards" id="THUMPD1"/>
<dbReference type="MIM" id="616662">
    <property type="type" value="gene"/>
</dbReference>
<dbReference type="MIM" id="619989">
    <property type="type" value="phenotype"/>
</dbReference>
<dbReference type="neXtProt" id="NX_Q9NXG2"/>
<dbReference type="OpenTargets" id="ENSG00000066654"/>
<dbReference type="PharmGKB" id="PA134983093"/>
<dbReference type="VEuPathDB" id="HostDB:ENSG00000066654"/>
<dbReference type="eggNOG" id="KOG3943">
    <property type="taxonomic scope" value="Eukaryota"/>
</dbReference>
<dbReference type="GeneTree" id="ENSGT00390000002365"/>
<dbReference type="HOGENOM" id="CLU_039352_0_0_1"/>
<dbReference type="InParanoid" id="Q9NXG2"/>
<dbReference type="OMA" id="MNEKACV"/>
<dbReference type="OrthoDB" id="367221at2759"/>
<dbReference type="PAN-GO" id="Q9NXG2">
    <property type="GO annotations" value="2 GO annotations based on evolutionary models"/>
</dbReference>
<dbReference type="PhylomeDB" id="Q9NXG2"/>
<dbReference type="TreeFam" id="TF313884"/>
<dbReference type="PathwayCommons" id="Q9NXG2"/>
<dbReference type="Reactome" id="R-HSA-6790901">
    <property type="pathway name" value="rRNA modification in the nucleus and cytosol"/>
</dbReference>
<dbReference type="SignaLink" id="Q9NXG2"/>
<dbReference type="BioGRID-ORCS" id="55623">
    <property type="hits" value="41 hits in 1154 CRISPR screens"/>
</dbReference>
<dbReference type="ChiTaRS" id="THUMPD1">
    <property type="organism name" value="human"/>
</dbReference>
<dbReference type="EvolutionaryTrace" id="Q9NXG2"/>
<dbReference type="GenomeRNAi" id="55623"/>
<dbReference type="Pharos" id="Q9NXG2">
    <property type="development level" value="Tbio"/>
</dbReference>
<dbReference type="PRO" id="PR:Q9NXG2"/>
<dbReference type="Proteomes" id="UP000005640">
    <property type="component" value="Chromosome 16"/>
</dbReference>
<dbReference type="RNAct" id="Q9NXG2">
    <property type="molecule type" value="protein"/>
</dbReference>
<dbReference type="Bgee" id="ENSG00000066654">
    <property type="expression patterns" value="Expressed in secondary oocyte and 214 other cell types or tissues"/>
</dbReference>
<dbReference type="ExpressionAtlas" id="Q9NXG2">
    <property type="expression patterns" value="baseline and differential"/>
</dbReference>
<dbReference type="GO" id="GO:0005654">
    <property type="term" value="C:nucleoplasm"/>
    <property type="evidence" value="ECO:0000304"/>
    <property type="project" value="Reactome"/>
</dbReference>
<dbReference type="GO" id="GO:0003723">
    <property type="term" value="F:RNA binding"/>
    <property type="evidence" value="ECO:0007005"/>
    <property type="project" value="UniProtKB"/>
</dbReference>
<dbReference type="GO" id="GO:0006400">
    <property type="term" value="P:tRNA modification"/>
    <property type="evidence" value="ECO:0000318"/>
    <property type="project" value="GO_Central"/>
</dbReference>
<dbReference type="CDD" id="cd11717">
    <property type="entry name" value="THUMP_THUMPD1_like"/>
    <property type="match status" value="1"/>
</dbReference>
<dbReference type="FunFam" id="3.30.2300.10:FF:000001">
    <property type="entry name" value="THUMP domain-containing protein 1"/>
    <property type="match status" value="1"/>
</dbReference>
<dbReference type="Gene3D" id="3.30.2300.10">
    <property type="entry name" value="THUMP superfamily"/>
    <property type="match status" value="1"/>
</dbReference>
<dbReference type="InterPro" id="IPR004114">
    <property type="entry name" value="THUMP_dom"/>
</dbReference>
<dbReference type="InterPro" id="IPR040183">
    <property type="entry name" value="THUMPD1-like"/>
</dbReference>
<dbReference type="PANTHER" id="PTHR13452">
    <property type="entry name" value="THUMP DOMAIN CONTAINING PROTEIN 1-RELATED"/>
    <property type="match status" value="1"/>
</dbReference>
<dbReference type="PANTHER" id="PTHR13452:SF15">
    <property type="entry name" value="THUMP DOMAIN-CONTAINING PROTEIN 1"/>
    <property type="match status" value="1"/>
</dbReference>
<dbReference type="Pfam" id="PF02926">
    <property type="entry name" value="THUMP"/>
    <property type="match status" value="1"/>
</dbReference>
<dbReference type="SMART" id="SM00981">
    <property type="entry name" value="THUMP"/>
    <property type="match status" value="1"/>
</dbReference>
<dbReference type="SUPFAM" id="SSF143437">
    <property type="entry name" value="THUMP domain-like"/>
    <property type="match status" value="1"/>
</dbReference>
<dbReference type="PROSITE" id="PS51165">
    <property type="entry name" value="THUMP"/>
    <property type="match status" value="1"/>
</dbReference>
<name>THUM1_HUMAN</name>
<organism>
    <name type="scientific">Homo sapiens</name>
    <name type="common">Human</name>
    <dbReference type="NCBI Taxonomy" id="9606"/>
    <lineage>
        <taxon>Eukaryota</taxon>
        <taxon>Metazoa</taxon>
        <taxon>Chordata</taxon>
        <taxon>Craniata</taxon>
        <taxon>Vertebrata</taxon>
        <taxon>Euteleostomi</taxon>
        <taxon>Mammalia</taxon>
        <taxon>Eutheria</taxon>
        <taxon>Euarchontoglires</taxon>
        <taxon>Primates</taxon>
        <taxon>Haplorrhini</taxon>
        <taxon>Catarrhini</taxon>
        <taxon>Hominidae</taxon>
        <taxon>Homo</taxon>
    </lineage>
</organism>
<protein>
    <recommendedName>
        <fullName>THUMP domain-containing protein 1</fullName>
    </recommendedName>
</protein>
<evidence type="ECO:0000255" key="1">
    <source>
        <dbReference type="PROSITE-ProRule" id="PRU00529"/>
    </source>
</evidence>
<evidence type="ECO:0000256" key="2">
    <source>
        <dbReference type="SAM" id="MobiDB-lite"/>
    </source>
</evidence>
<evidence type="ECO:0000269" key="3">
    <source>
    </source>
</evidence>
<evidence type="ECO:0000269" key="4">
    <source>
    </source>
</evidence>
<evidence type="ECO:0000269" key="5">
    <source>
    </source>
</evidence>
<evidence type="ECO:0000305" key="6"/>
<evidence type="ECO:0007744" key="7">
    <source>
    </source>
</evidence>
<evidence type="ECO:0007744" key="8">
    <source>
    </source>
</evidence>
<evidence type="ECO:0007744" key="9">
    <source>
    </source>
</evidence>
<evidence type="ECO:0007744" key="10">
    <source>
    </source>
</evidence>
<evidence type="ECO:0007744" key="11">
    <source>
    </source>
</evidence>
<evidence type="ECO:0007744" key="12">
    <source>
    </source>
</evidence>
<evidence type="ECO:0007744" key="13">
    <source>
    </source>
</evidence>
<evidence type="ECO:0007744" key="14">
    <source>
    </source>
</evidence>
<evidence type="ECO:0007829" key="15">
    <source>
        <dbReference type="PDB" id="2DIR"/>
    </source>
</evidence>
<feature type="initiator methionine" description="Removed" evidence="9 12">
    <location>
        <position position="1"/>
    </location>
</feature>
<feature type="chain" id="PRO_0000072530" description="THUMP domain-containing protein 1">
    <location>
        <begin position="2"/>
        <end position="353"/>
    </location>
</feature>
<feature type="domain" description="THUMP" evidence="1">
    <location>
        <begin position="147"/>
        <end position="254"/>
    </location>
</feature>
<feature type="region of interest" description="Disordered" evidence="2">
    <location>
        <begin position="1"/>
        <end position="20"/>
    </location>
</feature>
<feature type="region of interest" description="Disordered" evidence="2">
    <location>
        <begin position="73"/>
        <end position="96"/>
    </location>
</feature>
<feature type="region of interest" description="Disordered" evidence="2">
    <location>
        <begin position="270"/>
        <end position="353"/>
    </location>
</feature>
<feature type="compositionally biased region" description="Polar residues" evidence="2">
    <location>
        <begin position="1"/>
        <end position="10"/>
    </location>
</feature>
<feature type="compositionally biased region" description="Polar residues" evidence="2">
    <location>
        <begin position="273"/>
        <end position="282"/>
    </location>
</feature>
<feature type="compositionally biased region" description="Basic and acidic residues" evidence="2">
    <location>
        <begin position="283"/>
        <end position="296"/>
    </location>
</feature>
<feature type="compositionally biased region" description="Polar residues" evidence="2">
    <location>
        <begin position="297"/>
        <end position="327"/>
    </location>
</feature>
<feature type="modified residue" description="N-acetylalanine" evidence="9 12">
    <location>
        <position position="2"/>
    </location>
</feature>
<feature type="modified residue" description="Phosphothreonine" evidence="14">
    <location>
        <position position="79"/>
    </location>
</feature>
<feature type="modified residue" description="Phosphoserine" evidence="7 8 10 11 13 14">
    <location>
        <position position="86"/>
    </location>
</feature>
<feature type="modified residue" description="Phosphoserine" evidence="7 8 10 11 13 14">
    <location>
        <position position="88"/>
    </location>
</feature>
<feature type="modified residue" description="Phosphoserine" evidence="13">
    <location>
        <position position="119"/>
    </location>
</feature>
<feature type="modified residue" description="Phosphoserine" evidence="13">
    <location>
        <position position="270"/>
    </location>
</feature>
<feature type="sequence variant" id="VAR_087582" description="In NEDSOA; uncertain significance." evidence="5">
    <original>G</original>
    <variation>S</variation>
    <location>
        <position position="45"/>
    </location>
</feature>
<feature type="sequence variant" id="VAR_087583" description="In NEDSOA." evidence="5">
    <location>
        <begin position="114"/>
        <end position="353"/>
    </location>
</feature>
<feature type="sequence variant" id="VAR_087584" description="In NEDSOA." evidence="5">
    <location>
        <begin position="157"/>
        <end position="353"/>
    </location>
</feature>
<feature type="sequence variant" id="VAR_087585" description="In NEDSOA; severely decreased tRNA binding; decreased thermal stability." evidence="5">
    <original>P</original>
    <variation>S</variation>
    <location>
        <position position="164"/>
    </location>
</feature>
<feature type="sequence variant" id="VAR_082156" description="In NEDSOA; loss of function in tRNA acetylation; N4-acetylcytidine is not detected in small and tRNA samples from a homozygous patient." evidence="4 5">
    <location>
        <begin position="236"/>
        <end position="353"/>
    </location>
</feature>
<feature type="sequence variant" id="VAR_087586" description="In NEDSOA; uncertain significance." evidence="5">
    <location>
        <position position="258"/>
    </location>
</feature>
<feature type="sequence variant" id="VAR_037645" description="In dbSNP:rs11074471.">
    <original>E</original>
    <variation>D</variation>
    <location>
        <position position="311"/>
    </location>
</feature>
<feature type="sequence conflict" description="In Ref. 1; BAA91050." evidence="6" ref="1">
    <original>Q</original>
    <variation>R</variation>
    <location>
        <position position="84"/>
    </location>
</feature>
<feature type="sequence conflict" description="In Ref. 1; BAA91050." evidence="6" ref="1">
    <original>K</original>
    <variation>E</variation>
    <location>
        <position position="285"/>
    </location>
</feature>
<feature type="sequence conflict" description="In Ref. 1; BAA91050." evidence="6" ref="1">
    <original>F</original>
    <variation>S</variation>
    <location>
        <position position="352"/>
    </location>
</feature>
<feature type="helix" evidence="15">
    <location>
        <begin position="171"/>
        <end position="188"/>
    </location>
</feature>
<feature type="strand" evidence="15">
    <location>
        <begin position="195"/>
        <end position="201"/>
    </location>
</feature>
<feature type="helix" evidence="15">
    <location>
        <begin position="210"/>
        <end position="224"/>
    </location>
</feature>
<feature type="strand" evidence="15">
    <location>
        <begin position="232"/>
        <end position="234"/>
    </location>
</feature>
<feature type="strand" evidence="15">
    <location>
        <begin position="236"/>
        <end position="244"/>
    </location>
</feature>
<feature type="strand" evidence="15">
    <location>
        <begin position="247"/>
        <end position="254"/>
    </location>
</feature>
<accession>Q9NXG2</accession>
<accession>Q9BWC3</accession>